<dbReference type="EC" id="1.17.7.4" evidence="1"/>
<dbReference type="EMBL" id="CP000058">
    <property type="protein sequence ID" value="AAZ37821.1"/>
    <property type="molecule type" value="Genomic_DNA"/>
</dbReference>
<dbReference type="RefSeq" id="WP_004659634.1">
    <property type="nucleotide sequence ID" value="NC_005773.3"/>
</dbReference>
<dbReference type="SMR" id="Q48NK3"/>
<dbReference type="GeneID" id="61868051"/>
<dbReference type="KEGG" id="psp:PSPPH_0724"/>
<dbReference type="eggNOG" id="COG0761">
    <property type="taxonomic scope" value="Bacteria"/>
</dbReference>
<dbReference type="HOGENOM" id="CLU_027486_1_0_6"/>
<dbReference type="UniPathway" id="UPA00056">
    <property type="reaction ID" value="UER00097"/>
</dbReference>
<dbReference type="UniPathway" id="UPA00059">
    <property type="reaction ID" value="UER00105"/>
</dbReference>
<dbReference type="Proteomes" id="UP000000551">
    <property type="component" value="Chromosome"/>
</dbReference>
<dbReference type="GO" id="GO:0051539">
    <property type="term" value="F:4 iron, 4 sulfur cluster binding"/>
    <property type="evidence" value="ECO:0007669"/>
    <property type="project" value="UniProtKB-UniRule"/>
</dbReference>
<dbReference type="GO" id="GO:0051745">
    <property type="term" value="F:4-hydroxy-3-methylbut-2-enyl diphosphate reductase activity"/>
    <property type="evidence" value="ECO:0007669"/>
    <property type="project" value="UniProtKB-UniRule"/>
</dbReference>
<dbReference type="GO" id="GO:0046872">
    <property type="term" value="F:metal ion binding"/>
    <property type="evidence" value="ECO:0007669"/>
    <property type="project" value="UniProtKB-KW"/>
</dbReference>
<dbReference type="GO" id="GO:0050992">
    <property type="term" value="P:dimethylallyl diphosphate biosynthetic process"/>
    <property type="evidence" value="ECO:0007669"/>
    <property type="project" value="UniProtKB-UniRule"/>
</dbReference>
<dbReference type="GO" id="GO:0019288">
    <property type="term" value="P:isopentenyl diphosphate biosynthetic process, methylerythritol 4-phosphate pathway"/>
    <property type="evidence" value="ECO:0007669"/>
    <property type="project" value="UniProtKB-UniRule"/>
</dbReference>
<dbReference type="GO" id="GO:0016114">
    <property type="term" value="P:terpenoid biosynthetic process"/>
    <property type="evidence" value="ECO:0007669"/>
    <property type="project" value="UniProtKB-UniRule"/>
</dbReference>
<dbReference type="CDD" id="cd13944">
    <property type="entry name" value="lytB_ispH"/>
    <property type="match status" value="1"/>
</dbReference>
<dbReference type="Gene3D" id="3.40.50.11270">
    <property type="match status" value="1"/>
</dbReference>
<dbReference type="Gene3D" id="3.40.1010.20">
    <property type="entry name" value="4-hydroxy-3-methylbut-2-enyl diphosphate reductase, catalytic domain"/>
    <property type="match status" value="2"/>
</dbReference>
<dbReference type="HAMAP" id="MF_00191">
    <property type="entry name" value="IspH"/>
    <property type="match status" value="1"/>
</dbReference>
<dbReference type="InterPro" id="IPR003451">
    <property type="entry name" value="LytB/IspH"/>
</dbReference>
<dbReference type="NCBIfam" id="TIGR00216">
    <property type="entry name" value="ispH_lytB"/>
    <property type="match status" value="1"/>
</dbReference>
<dbReference type="NCBIfam" id="NF002188">
    <property type="entry name" value="PRK01045.1-2"/>
    <property type="match status" value="1"/>
</dbReference>
<dbReference type="NCBIfam" id="NF002190">
    <property type="entry name" value="PRK01045.1-4"/>
    <property type="match status" value="1"/>
</dbReference>
<dbReference type="PANTHER" id="PTHR30426">
    <property type="entry name" value="4-HYDROXY-3-METHYLBUT-2-ENYL DIPHOSPHATE REDUCTASE"/>
    <property type="match status" value="1"/>
</dbReference>
<dbReference type="PANTHER" id="PTHR30426:SF0">
    <property type="entry name" value="4-HYDROXY-3-METHYLBUT-2-ENYL DIPHOSPHATE REDUCTASE"/>
    <property type="match status" value="1"/>
</dbReference>
<dbReference type="Pfam" id="PF02401">
    <property type="entry name" value="LYTB"/>
    <property type="match status" value="1"/>
</dbReference>
<keyword id="KW-0004">4Fe-4S</keyword>
<keyword id="KW-0408">Iron</keyword>
<keyword id="KW-0411">Iron-sulfur</keyword>
<keyword id="KW-0414">Isoprene biosynthesis</keyword>
<keyword id="KW-0479">Metal-binding</keyword>
<keyword id="KW-0560">Oxidoreductase</keyword>
<name>ISPH_PSE14</name>
<organism>
    <name type="scientific">Pseudomonas savastanoi pv. phaseolicola (strain 1448A / Race 6)</name>
    <name type="common">Pseudomonas syringae pv. phaseolicola (strain 1448A / Race 6)</name>
    <dbReference type="NCBI Taxonomy" id="264730"/>
    <lineage>
        <taxon>Bacteria</taxon>
        <taxon>Pseudomonadati</taxon>
        <taxon>Pseudomonadota</taxon>
        <taxon>Gammaproteobacteria</taxon>
        <taxon>Pseudomonadales</taxon>
        <taxon>Pseudomonadaceae</taxon>
        <taxon>Pseudomonas</taxon>
    </lineage>
</organism>
<sequence>MQIKLANPRGFCAGVDRAIEIVNRALEVFGPPIYVRHEVVHNKFVVEDLRSRGAIFVEELDQVPDDVIVIFSAHGVSQAVRTEAAGRGLKVFDATCPLVTKVHIEVARYSRDGRECILIGHAGHPEVEGTMGQYDASNGGAIYLVEDEEDVASLQVRNPDSLAFVTQTTLSMDDTSRVIDALRKRFPAIGGPRKDDICYATQNRQDAVKQLADECDVVLVVGSPNSSNSNRLRELAERMATPAYLIDGAEDMQQGWFEGVERIGITAGASAPEVLVRGVIQQLQAWGATGADELAGREENITFSMPKELRVKSLL</sequence>
<gene>
    <name evidence="1" type="primary">ispH</name>
    <name type="ordered locus">PSPPH_0724</name>
</gene>
<protein>
    <recommendedName>
        <fullName evidence="1">4-hydroxy-3-methylbut-2-enyl diphosphate reductase</fullName>
        <shortName evidence="1">HMBPP reductase</shortName>
        <ecNumber evidence="1">1.17.7.4</ecNumber>
    </recommendedName>
</protein>
<comment type="function">
    <text evidence="1">Catalyzes the conversion of 1-hydroxy-2-methyl-2-(E)-butenyl 4-diphosphate (HMBPP) into a mixture of isopentenyl diphosphate (IPP) and dimethylallyl diphosphate (DMAPP). Acts in the terminal step of the DOXP/MEP pathway for isoprenoid precursor biosynthesis.</text>
</comment>
<comment type="catalytic activity">
    <reaction evidence="1">
        <text>isopentenyl diphosphate + 2 oxidized [2Fe-2S]-[ferredoxin] + H2O = (2E)-4-hydroxy-3-methylbut-2-enyl diphosphate + 2 reduced [2Fe-2S]-[ferredoxin] + 2 H(+)</text>
        <dbReference type="Rhea" id="RHEA:24488"/>
        <dbReference type="Rhea" id="RHEA-COMP:10000"/>
        <dbReference type="Rhea" id="RHEA-COMP:10001"/>
        <dbReference type="ChEBI" id="CHEBI:15377"/>
        <dbReference type="ChEBI" id="CHEBI:15378"/>
        <dbReference type="ChEBI" id="CHEBI:33737"/>
        <dbReference type="ChEBI" id="CHEBI:33738"/>
        <dbReference type="ChEBI" id="CHEBI:128753"/>
        <dbReference type="ChEBI" id="CHEBI:128769"/>
        <dbReference type="EC" id="1.17.7.4"/>
    </reaction>
</comment>
<comment type="catalytic activity">
    <reaction evidence="1">
        <text>dimethylallyl diphosphate + 2 oxidized [2Fe-2S]-[ferredoxin] + H2O = (2E)-4-hydroxy-3-methylbut-2-enyl diphosphate + 2 reduced [2Fe-2S]-[ferredoxin] + 2 H(+)</text>
        <dbReference type="Rhea" id="RHEA:24825"/>
        <dbReference type="Rhea" id="RHEA-COMP:10000"/>
        <dbReference type="Rhea" id="RHEA-COMP:10001"/>
        <dbReference type="ChEBI" id="CHEBI:15377"/>
        <dbReference type="ChEBI" id="CHEBI:15378"/>
        <dbReference type="ChEBI" id="CHEBI:33737"/>
        <dbReference type="ChEBI" id="CHEBI:33738"/>
        <dbReference type="ChEBI" id="CHEBI:57623"/>
        <dbReference type="ChEBI" id="CHEBI:128753"/>
        <dbReference type="EC" id="1.17.7.4"/>
    </reaction>
</comment>
<comment type="cofactor">
    <cofactor evidence="1">
        <name>[4Fe-4S] cluster</name>
        <dbReference type="ChEBI" id="CHEBI:49883"/>
    </cofactor>
    <text evidence="1">Binds 1 [4Fe-4S] cluster per subunit.</text>
</comment>
<comment type="pathway">
    <text evidence="1">Isoprenoid biosynthesis; dimethylallyl diphosphate biosynthesis; dimethylallyl diphosphate from (2E)-4-hydroxy-3-methylbutenyl diphosphate: step 1/1.</text>
</comment>
<comment type="pathway">
    <text evidence="1">Isoprenoid biosynthesis; isopentenyl diphosphate biosynthesis via DXP pathway; isopentenyl diphosphate from 1-deoxy-D-xylulose 5-phosphate: step 6/6.</text>
</comment>
<comment type="similarity">
    <text evidence="1">Belongs to the IspH family.</text>
</comment>
<accession>Q48NK3</accession>
<reference key="1">
    <citation type="journal article" date="2005" name="J. Bacteriol.">
        <title>Whole-genome sequence analysis of Pseudomonas syringae pv. phaseolicola 1448A reveals divergence among pathovars in genes involved in virulence and transposition.</title>
        <authorList>
            <person name="Joardar V."/>
            <person name="Lindeberg M."/>
            <person name="Jackson R.W."/>
            <person name="Selengut J."/>
            <person name="Dodson R."/>
            <person name="Brinkac L.M."/>
            <person name="Daugherty S.C."/>
            <person name="DeBoy R.T."/>
            <person name="Durkin A.S."/>
            <person name="Gwinn Giglio M."/>
            <person name="Madupu R."/>
            <person name="Nelson W.C."/>
            <person name="Rosovitz M.J."/>
            <person name="Sullivan S.A."/>
            <person name="Crabtree J."/>
            <person name="Creasy T."/>
            <person name="Davidsen T.M."/>
            <person name="Haft D.H."/>
            <person name="Zafar N."/>
            <person name="Zhou L."/>
            <person name="Halpin R."/>
            <person name="Holley T."/>
            <person name="Khouri H.M."/>
            <person name="Feldblyum T.V."/>
            <person name="White O."/>
            <person name="Fraser C.M."/>
            <person name="Chatterjee A.K."/>
            <person name="Cartinhour S."/>
            <person name="Schneider D."/>
            <person name="Mansfield J.W."/>
            <person name="Collmer A."/>
            <person name="Buell R."/>
        </authorList>
    </citation>
    <scope>NUCLEOTIDE SEQUENCE [LARGE SCALE GENOMIC DNA]</scope>
    <source>
        <strain>1448A / Race 6</strain>
    </source>
</reference>
<evidence type="ECO:0000255" key="1">
    <source>
        <dbReference type="HAMAP-Rule" id="MF_00191"/>
    </source>
</evidence>
<proteinExistence type="inferred from homology"/>
<feature type="chain" id="PRO_1000021157" description="4-hydroxy-3-methylbut-2-enyl diphosphate reductase">
    <location>
        <begin position="1"/>
        <end position="315"/>
    </location>
</feature>
<feature type="active site" description="Proton donor" evidence="1">
    <location>
        <position position="126"/>
    </location>
</feature>
<feature type="binding site" evidence="1">
    <location>
        <position position="12"/>
    </location>
    <ligand>
        <name>[4Fe-4S] cluster</name>
        <dbReference type="ChEBI" id="CHEBI:49883"/>
    </ligand>
</feature>
<feature type="binding site" evidence="1">
    <location>
        <position position="41"/>
    </location>
    <ligand>
        <name>(2E)-4-hydroxy-3-methylbut-2-enyl diphosphate</name>
        <dbReference type="ChEBI" id="CHEBI:128753"/>
    </ligand>
</feature>
<feature type="binding site" evidence="1">
    <location>
        <position position="41"/>
    </location>
    <ligand>
        <name>dimethylallyl diphosphate</name>
        <dbReference type="ChEBI" id="CHEBI:57623"/>
    </ligand>
</feature>
<feature type="binding site" evidence="1">
    <location>
        <position position="41"/>
    </location>
    <ligand>
        <name>isopentenyl diphosphate</name>
        <dbReference type="ChEBI" id="CHEBI:128769"/>
    </ligand>
</feature>
<feature type="binding site" evidence="1">
    <location>
        <position position="74"/>
    </location>
    <ligand>
        <name>(2E)-4-hydroxy-3-methylbut-2-enyl diphosphate</name>
        <dbReference type="ChEBI" id="CHEBI:128753"/>
    </ligand>
</feature>
<feature type="binding site" evidence="1">
    <location>
        <position position="74"/>
    </location>
    <ligand>
        <name>dimethylallyl diphosphate</name>
        <dbReference type="ChEBI" id="CHEBI:57623"/>
    </ligand>
</feature>
<feature type="binding site" evidence="1">
    <location>
        <position position="74"/>
    </location>
    <ligand>
        <name>isopentenyl diphosphate</name>
        <dbReference type="ChEBI" id="CHEBI:128769"/>
    </ligand>
</feature>
<feature type="binding site" evidence="1">
    <location>
        <position position="96"/>
    </location>
    <ligand>
        <name>[4Fe-4S] cluster</name>
        <dbReference type="ChEBI" id="CHEBI:49883"/>
    </ligand>
</feature>
<feature type="binding site" evidence="1">
    <location>
        <position position="124"/>
    </location>
    <ligand>
        <name>(2E)-4-hydroxy-3-methylbut-2-enyl diphosphate</name>
        <dbReference type="ChEBI" id="CHEBI:128753"/>
    </ligand>
</feature>
<feature type="binding site" evidence="1">
    <location>
        <position position="124"/>
    </location>
    <ligand>
        <name>dimethylallyl diphosphate</name>
        <dbReference type="ChEBI" id="CHEBI:57623"/>
    </ligand>
</feature>
<feature type="binding site" evidence="1">
    <location>
        <position position="124"/>
    </location>
    <ligand>
        <name>isopentenyl diphosphate</name>
        <dbReference type="ChEBI" id="CHEBI:128769"/>
    </ligand>
</feature>
<feature type="binding site" evidence="1">
    <location>
        <position position="168"/>
    </location>
    <ligand>
        <name>(2E)-4-hydroxy-3-methylbut-2-enyl diphosphate</name>
        <dbReference type="ChEBI" id="CHEBI:128753"/>
    </ligand>
</feature>
<feature type="binding site" evidence="1">
    <location>
        <position position="198"/>
    </location>
    <ligand>
        <name>[4Fe-4S] cluster</name>
        <dbReference type="ChEBI" id="CHEBI:49883"/>
    </ligand>
</feature>
<feature type="binding site" evidence="1">
    <location>
        <position position="226"/>
    </location>
    <ligand>
        <name>(2E)-4-hydroxy-3-methylbut-2-enyl diphosphate</name>
        <dbReference type="ChEBI" id="CHEBI:128753"/>
    </ligand>
</feature>
<feature type="binding site" evidence="1">
    <location>
        <position position="226"/>
    </location>
    <ligand>
        <name>dimethylallyl diphosphate</name>
        <dbReference type="ChEBI" id="CHEBI:57623"/>
    </ligand>
</feature>
<feature type="binding site" evidence="1">
    <location>
        <position position="226"/>
    </location>
    <ligand>
        <name>isopentenyl diphosphate</name>
        <dbReference type="ChEBI" id="CHEBI:128769"/>
    </ligand>
</feature>
<feature type="binding site" evidence="1">
    <location>
        <position position="227"/>
    </location>
    <ligand>
        <name>(2E)-4-hydroxy-3-methylbut-2-enyl diphosphate</name>
        <dbReference type="ChEBI" id="CHEBI:128753"/>
    </ligand>
</feature>
<feature type="binding site" evidence="1">
    <location>
        <position position="227"/>
    </location>
    <ligand>
        <name>dimethylallyl diphosphate</name>
        <dbReference type="ChEBI" id="CHEBI:57623"/>
    </ligand>
</feature>
<feature type="binding site" evidence="1">
    <location>
        <position position="227"/>
    </location>
    <ligand>
        <name>isopentenyl diphosphate</name>
        <dbReference type="ChEBI" id="CHEBI:128769"/>
    </ligand>
</feature>
<feature type="binding site" evidence="1">
    <location>
        <position position="228"/>
    </location>
    <ligand>
        <name>(2E)-4-hydroxy-3-methylbut-2-enyl diphosphate</name>
        <dbReference type="ChEBI" id="CHEBI:128753"/>
    </ligand>
</feature>
<feature type="binding site" evidence="1">
    <location>
        <position position="228"/>
    </location>
    <ligand>
        <name>dimethylallyl diphosphate</name>
        <dbReference type="ChEBI" id="CHEBI:57623"/>
    </ligand>
</feature>
<feature type="binding site" evidence="1">
    <location>
        <position position="228"/>
    </location>
    <ligand>
        <name>isopentenyl diphosphate</name>
        <dbReference type="ChEBI" id="CHEBI:128769"/>
    </ligand>
</feature>
<feature type="binding site" evidence="1">
    <location>
        <position position="270"/>
    </location>
    <ligand>
        <name>(2E)-4-hydroxy-3-methylbut-2-enyl diphosphate</name>
        <dbReference type="ChEBI" id="CHEBI:128753"/>
    </ligand>
</feature>
<feature type="binding site" evidence="1">
    <location>
        <position position="270"/>
    </location>
    <ligand>
        <name>dimethylallyl diphosphate</name>
        <dbReference type="ChEBI" id="CHEBI:57623"/>
    </ligand>
</feature>
<feature type="binding site" evidence="1">
    <location>
        <position position="270"/>
    </location>
    <ligand>
        <name>isopentenyl diphosphate</name>
        <dbReference type="ChEBI" id="CHEBI:128769"/>
    </ligand>
</feature>